<protein>
    <recommendedName>
        <fullName evidence="1">Putative septation protein SpoVG</fullName>
    </recommendedName>
    <alternativeName>
        <fullName evidence="1">Stage V sporulation protein G</fullName>
    </alternativeName>
</protein>
<feature type="chain" id="PRO_1000196490" description="Putative septation protein SpoVG">
    <location>
        <begin position="1"/>
        <end position="97"/>
    </location>
</feature>
<reference key="1">
    <citation type="submission" date="2008-10" db="EMBL/GenBank/DDBJ databases">
        <title>Genome sequence of Bacillus cereus G9842.</title>
        <authorList>
            <person name="Dodson R.J."/>
            <person name="Durkin A.S."/>
            <person name="Rosovitz M.J."/>
            <person name="Rasko D.A."/>
            <person name="Hoffmaster A."/>
            <person name="Ravel J."/>
            <person name="Sutton G."/>
        </authorList>
    </citation>
    <scope>NUCLEOTIDE SEQUENCE [LARGE SCALE GENOMIC DNA]</scope>
    <source>
        <strain>G9842</strain>
    </source>
</reference>
<gene>
    <name evidence="1" type="primary">spoVG</name>
    <name type="ordered locus">BCG9842_B5263</name>
</gene>
<name>SP5G_BACC2</name>
<evidence type="ECO:0000255" key="1">
    <source>
        <dbReference type="HAMAP-Rule" id="MF_00819"/>
    </source>
</evidence>
<organism>
    <name type="scientific">Bacillus cereus (strain G9842)</name>
    <dbReference type="NCBI Taxonomy" id="405531"/>
    <lineage>
        <taxon>Bacteria</taxon>
        <taxon>Bacillati</taxon>
        <taxon>Bacillota</taxon>
        <taxon>Bacilli</taxon>
        <taxon>Bacillales</taxon>
        <taxon>Bacillaceae</taxon>
        <taxon>Bacillus</taxon>
        <taxon>Bacillus cereus group</taxon>
    </lineage>
</organism>
<sequence length="97" mass="10934">MEVTDVRLRRVNTEGRMRAIASITLDHEFVVHDIRVIDGNNGLFVAMPSKRTPDGEFRDIAHPINSGTRSKIQDAVLTEYHRLGELEEVEFEEAGAS</sequence>
<comment type="function">
    <text evidence="1">Essential for sporulation. Interferes with or is a negative regulator of the pathway leading to asymmetric septation.</text>
</comment>
<comment type="similarity">
    <text evidence="1">Belongs to the SpoVG family.</text>
</comment>
<proteinExistence type="inferred from homology"/>
<accession>B7ISV8</accession>
<dbReference type="EMBL" id="CP001186">
    <property type="protein sequence ID" value="ACK97814.1"/>
    <property type="molecule type" value="Genomic_DNA"/>
</dbReference>
<dbReference type="RefSeq" id="WP_000454041.1">
    <property type="nucleotide sequence ID" value="NC_011772.1"/>
</dbReference>
<dbReference type="SMR" id="B7ISV8"/>
<dbReference type="GeneID" id="93011022"/>
<dbReference type="KEGG" id="bcg:BCG9842_B5263"/>
<dbReference type="HOGENOM" id="CLU_103669_2_1_9"/>
<dbReference type="Proteomes" id="UP000006744">
    <property type="component" value="Chromosome"/>
</dbReference>
<dbReference type="GO" id="GO:0030436">
    <property type="term" value="P:asexual sporulation"/>
    <property type="evidence" value="ECO:0007669"/>
    <property type="project" value="UniProtKB-UniRule"/>
</dbReference>
<dbReference type="GO" id="GO:0000917">
    <property type="term" value="P:division septum assembly"/>
    <property type="evidence" value="ECO:0007669"/>
    <property type="project" value="UniProtKB-KW"/>
</dbReference>
<dbReference type="GO" id="GO:0030435">
    <property type="term" value="P:sporulation resulting in formation of a cellular spore"/>
    <property type="evidence" value="ECO:0007669"/>
    <property type="project" value="UniProtKB-KW"/>
</dbReference>
<dbReference type="FunFam" id="3.30.1120.40:FF:000001">
    <property type="entry name" value="Putative septation protein SpoVG"/>
    <property type="match status" value="1"/>
</dbReference>
<dbReference type="Gene3D" id="3.30.1120.40">
    <property type="entry name" value="Stage V sporulation protein G"/>
    <property type="match status" value="1"/>
</dbReference>
<dbReference type="HAMAP" id="MF_00819">
    <property type="entry name" value="SpoVG"/>
    <property type="match status" value="1"/>
</dbReference>
<dbReference type="InterPro" id="IPR007170">
    <property type="entry name" value="SpoVG"/>
</dbReference>
<dbReference type="InterPro" id="IPR036751">
    <property type="entry name" value="SpoVG_sf"/>
</dbReference>
<dbReference type="NCBIfam" id="NF009749">
    <property type="entry name" value="PRK13259.1"/>
    <property type="match status" value="1"/>
</dbReference>
<dbReference type="PANTHER" id="PTHR38429">
    <property type="entry name" value="SEPTATION PROTEIN SPOVG-RELATED"/>
    <property type="match status" value="1"/>
</dbReference>
<dbReference type="PANTHER" id="PTHR38429:SF1">
    <property type="entry name" value="SEPTATION PROTEIN SPOVG-RELATED"/>
    <property type="match status" value="1"/>
</dbReference>
<dbReference type="Pfam" id="PF04026">
    <property type="entry name" value="SpoVG"/>
    <property type="match status" value="1"/>
</dbReference>
<dbReference type="SUPFAM" id="SSF160537">
    <property type="entry name" value="SpoVG-like"/>
    <property type="match status" value="1"/>
</dbReference>
<keyword id="KW-0131">Cell cycle</keyword>
<keyword id="KW-0132">Cell division</keyword>
<keyword id="KW-0717">Septation</keyword>
<keyword id="KW-0749">Sporulation</keyword>